<feature type="chain" id="PRO_0000321966" description="C4-dicarboxylate transport protein">
    <location>
        <begin position="1"/>
        <end position="448"/>
    </location>
</feature>
<feature type="transmembrane region" description="Helical" evidence="1">
    <location>
        <begin position="9"/>
        <end position="29"/>
    </location>
</feature>
<feature type="transmembrane region" description="Helical" evidence="1">
    <location>
        <begin position="59"/>
        <end position="79"/>
    </location>
</feature>
<feature type="transmembrane region" description="Helical" evidence="1">
    <location>
        <begin position="91"/>
        <end position="111"/>
    </location>
</feature>
<feature type="transmembrane region" description="Helical" evidence="1">
    <location>
        <begin position="159"/>
        <end position="179"/>
    </location>
</feature>
<feature type="transmembrane region" description="Helical" evidence="1">
    <location>
        <begin position="203"/>
        <end position="223"/>
    </location>
</feature>
<feature type="transmembrane region" description="Helical" evidence="1">
    <location>
        <begin position="237"/>
        <end position="257"/>
    </location>
</feature>
<feature type="transmembrane region" description="Helical" evidence="1">
    <location>
        <begin position="312"/>
        <end position="332"/>
    </location>
</feature>
<feature type="transmembrane region" description="Helical" evidence="1">
    <location>
        <begin position="345"/>
        <end position="365"/>
    </location>
</feature>
<feature type="transmembrane region" description="Helical" evidence="1">
    <location>
        <begin position="367"/>
        <end position="387"/>
    </location>
</feature>
<name>DCTA_ACIAD</name>
<comment type="function">
    <text evidence="1">Responsible for the transport of dicarboxylates such as succinate, fumarate, and malate from the periplasm across the membrane.</text>
</comment>
<comment type="subcellular location">
    <subcellularLocation>
        <location evidence="1">Cell inner membrane</location>
        <topology evidence="1">Multi-pass membrane protein</topology>
    </subcellularLocation>
</comment>
<comment type="similarity">
    <text evidence="1">Belongs to the dicarboxylate/amino acid:cation symporter (DAACS) (TC 2.A.23) family.</text>
</comment>
<organism>
    <name type="scientific">Acinetobacter baylyi (strain ATCC 33305 / BD413 / ADP1)</name>
    <dbReference type="NCBI Taxonomy" id="62977"/>
    <lineage>
        <taxon>Bacteria</taxon>
        <taxon>Pseudomonadati</taxon>
        <taxon>Pseudomonadota</taxon>
        <taxon>Gammaproteobacteria</taxon>
        <taxon>Moraxellales</taxon>
        <taxon>Moraxellaceae</taxon>
        <taxon>Acinetobacter</taxon>
    </lineage>
</organism>
<evidence type="ECO:0000255" key="1">
    <source>
        <dbReference type="HAMAP-Rule" id="MF_01300"/>
    </source>
</evidence>
<proteinExistence type="inferred from homology"/>
<accession>Q6FA90</accession>
<reference key="1">
    <citation type="journal article" date="2004" name="Nucleic Acids Res.">
        <title>Unique features revealed by the genome sequence of Acinetobacter sp. ADP1, a versatile and naturally transformation competent bacterium.</title>
        <authorList>
            <person name="Barbe V."/>
            <person name="Vallenet D."/>
            <person name="Fonknechten N."/>
            <person name="Kreimeyer A."/>
            <person name="Oztas S."/>
            <person name="Labarre L."/>
            <person name="Cruveiller S."/>
            <person name="Robert C."/>
            <person name="Duprat S."/>
            <person name="Wincker P."/>
            <person name="Ornston L.N."/>
            <person name="Weissenbach J."/>
            <person name="Marliere P."/>
            <person name="Cohen G.N."/>
            <person name="Medigue C."/>
        </authorList>
    </citation>
    <scope>NUCLEOTIDE SEQUENCE [LARGE SCALE GENOMIC DNA]</scope>
    <source>
        <strain>ATCC 33305 / BD413 / ADP1</strain>
    </source>
</reference>
<sequence length="448" mass="47690">MAKKPIYKSLYFQVIVAIIAGILVGHFYPSTTHVVDGVKEHIPGLGEQLKPLGDAFIRLIKMIIAPVIFCTVVSGIAGMESMKSVGKTGGVALLYFEVVSTIALLIGLLVINIAKPGVGMNVDPASLDTSGIAKYVASGQSQSTIEFLMHIIPETVVGAFANGEILQVLLFAIMFGFALHKLGDAGRPVLKFIDQISHVFFNIVNMIMKLAPIGAFGAMAFTIGKYGVGSLVQLGQLIICFYVTCLLFIFIVLGTISRICGFSILKMIRLIREELLIVLGTSSSESVLPRMLRKLEIAGCEKSVVGLVIPTGYSFNLDGTSIYLTMAAIFIAQATNTQLDVQHQITLLLVLLISSKGAAGVTGSGFIVMAATLSAVGHIPVAGLALILGIDRFMSEARALTNLTGNTLATIAVAKWVGALDKEKLDEALNNPAEVDRKMLEADRPAHA</sequence>
<dbReference type="EMBL" id="CR543861">
    <property type="protein sequence ID" value="CAG69023.1"/>
    <property type="molecule type" value="Genomic_DNA"/>
</dbReference>
<dbReference type="RefSeq" id="WP_004927832.1">
    <property type="nucleotide sequence ID" value="NC_005966.1"/>
</dbReference>
<dbReference type="SMR" id="Q6FA90"/>
<dbReference type="STRING" id="202950.GCA_001485005_00166"/>
<dbReference type="GeneID" id="45234559"/>
<dbReference type="KEGG" id="aci:ACIAD2227"/>
<dbReference type="eggNOG" id="COG1301">
    <property type="taxonomic scope" value="Bacteria"/>
</dbReference>
<dbReference type="HOGENOM" id="CLU_019375_7_0_6"/>
<dbReference type="OrthoDB" id="9766690at2"/>
<dbReference type="BioCyc" id="ASP62977:ACIAD_RS10205-MONOMER"/>
<dbReference type="Proteomes" id="UP000000430">
    <property type="component" value="Chromosome"/>
</dbReference>
<dbReference type="GO" id="GO:0005886">
    <property type="term" value="C:plasma membrane"/>
    <property type="evidence" value="ECO:0007669"/>
    <property type="project" value="UniProtKB-SubCell"/>
</dbReference>
<dbReference type="GO" id="GO:0015138">
    <property type="term" value="F:fumarate transmembrane transporter activity"/>
    <property type="evidence" value="ECO:0007669"/>
    <property type="project" value="TreeGrafter"/>
</dbReference>
<dbReference type="GO" id="GO:0015366">
    <property type="term" value="F:malate:proton symporter activity"/>
    <property type="evidence" value="ECO:0007669"/>
    <property type="project" value="TreeGrafter"/>
</dbReference>
<dbReference type="GO" id="GO:0015141">
    <property type="term" value="F:succinate transmembrane transporter activity"/>
    <property type="evidence" value="ECO:0007669"/>
    <property type="project" value="TreeGrafter"/>
</dbReference>
<dbReference type="GO" id="GO:0070778">
    <property type="term" value="P:L-aspartate transmembrane transport"/>
    <property type="evidence" value="ECO:0007669"/>
    <property type="project" value="TreeGrafter"/>
</dbReference>
<dbReference type="FunFam" id="1.10.3860.10:FF:000001">
    <property type="entry name" value="C4-dicarboxylate transport protein"/>
    <property type="match status" value="1"/>
</dbReference>
<dbReference type="Gene3D" id="1.10.3860.10">
    <property type="entry name" value="Sodium:dicarboxylate symporter"/>
    <property type="match status" value="1"/>
</dbReference>
<dbReference type="HAMAP" id="MF_01300">
    <property type="entry name" value="C4_dicarb_transport"/>
    <property type="match status" value="1"/>
</dbReference>
<dbReference type="InterPro" id="IPR023954">
    <property type="entry name" value="C4_dicarb_transport"/>
</dbReference>
<dbReference type="InterPro" id="IPR001991">
    <property type="entry name" value="Na-dicarboxylate_symporter"/>
</dbReference>
<dbReference type="InterPro" id="IPR018107">
    <property type="entry name" value="Na-dicarboxylate_symporter_CS"/>
</dbReference>
<dbReference type="InterPro" id="IPR036458">
    <property type="entry name" value="Na:dicarbo_symporter_sf"/>
</dbReference>
<dbReference type="NCBIfam" id="NF002461">
    <property type="entry name" value="PRK01663.1"/>
    <property type="match status" value="1"/>
</dbReference>
<dbReference type="NCBIfam" id="NF009587">
    <property type="entry name" value="PRK13027.1"/>
    <property type="match status" value="1"/>
</dbReference>
<dbReference type="PANTHER" id="PTHR42865:SF1">
    <property type="entry name" value="AEROBIC C4-DICARBOXYLATE TRANSPORT PROTEIN"/>
    <property type="match status" value="1"/>
</dbReference>
<dbReference type="PANTHER" id="PTHR42865">
    <property type="entry name" value="PROTON/GLUTAMATE-ASPARTATE SYMPORTER"/>
    <property type="match status" value="1"/>
</dbReference>
<dbReference type="Pfam" id="PF00375">
    <property type="entry name" value="SDF"/>
    <property type="match status" value="1"/>
</dbReference>
<dbReference type="PRINTS" id="PR00173">
    <property type="entry name" value="EDTRNSPORT"/>
</dbReference>
<dbReference type="SUPFAM" id="SSF118215">
    <property type="entry name" value="Proton glutamate symport protein"/>
    <property type="match status" value="1"/>
</dbReference>
<dbReference type="PROSITE" id="PS00713">
    <property type="entry name" value="NA_DICARBOXYL_SYMP_1"/>
    <property type="match status" value="1"/>
</dbReference>
<dbReference type="PROSITE" id="PS00714">
    <property type="entry name" value="NA_DICARBOXYL_SYMP_2"/>
    <property type="match status" value="1"/>
</dbReference>
<keyword id="KW-0997">Cell inner membrane</keyword>
<keyword id="KW-1003">Cell membrane</keyword>
<keyword id="KW-0472">Membrane</keyword>
<keyword id="KW-0769">Symport</keyword>
<keyword id="KW-0812">Transmembrane</keyword>
<keyword id="KW-1133">Transmembrane helix</keyword>
<keyword id="KW-0813">Transport</keyword>
<protein>
    <recommendedName>
        <fullName evidence="1">C4-dicarboxylate transport protein</fullName>
    </recommendedName>
</protein>
<gene>
    <name evidence="1" type="primary">dctA</name>
    <name type="ordered locus">ACIAD2227</name>
</gene>